<reference key="1">
    <citation type="journal article" date="2007" name="J. Bacteriol.">
        <title>Genome sequence and analysis of the soil cellulolytic actinomycete Thermobifida fusca YX.</title>
        <authorList>
            <person name="Lykidis A."/>
            <person name="Mavromatis K."/>
            <person name="Ivanova N."/>
            <person name="Anderson I."/>
            <person name="Land M."/>
            <person name="DiBartolo G."/>
            <person name="Martinez M."/>
            <person name="Lapidus A."/>
            <person name="Lucas S."/>
            <person name="Copeland A."/>
            <person name="Richardson P."/>
            <person name="Wilson D.B."/>
            <person name="Kyrpides N."/>
        </authorList>
    </citation>
    <scope>NUCLEOTIDE SEQUENCE [LARGE SCALE GENOMIC DNA]</scope>
    <source>
        <strain>YX</strain>
    </source>
</reference>
<organism>
    <name type="scientific">Thermobifida fusca (strain YX)</name>
    <dbReference type="NCBI Taxonomy" id="269800"/>
    <lineage>
        <taxon>Bacteria</taxon>
        <taxon>Bacillati</taxon>
        <taxon>Actinomycetota</taxon>
        <taxon>Actinomycetes</taxon>
        <taxon>Streptosporangiales</taxon>
        <taxon>Nocardiopsidaceae</taxon>
        <taxon>Thermobifida</taxon>
    </lineage>
</organism>
<name>GLMU_THEFY</name>
<proteinExistence type="inferred from homology"/>
<feature type="chain" id="PRO_0000233867" description="Bifunctional protein GlmU">
    <location>
        <begin position="1"/>
        <end position="484"/>
    </location>
</feature>
<feature type="region of interest" description="Pyrophosphorylase" evidence="1">
    <location>
        <begin position="1"/>
        <end position="240"/>
    </location>
</feature>
<feature type="region of interest" description="Linker" evidence="1">
    <location>
        <begin position="241"/>
        <end position="261"/>
    </location>
</feature>
<feature type="region of interest" description="N-acetyltransferase" evidence="1">
    <location>
        <begin position="262"/>
        <end position="484"/>
    </location>
</feature>
<feature type="region of interest" description="Disordered" evidence="2">
    <location>
        <begin position="457"/>
        <end position="484"/>
    </location>
</feature>
<feature type="compositionally biased region" description="Basic and acidic residues" evidence="2">
    <location>
        <begin position="474"/>
        <end position="484"/>
    </location>
</feature>
<feature type="active site" description="Proton acceptor" evidence="1">
    <location>
        <position position="373"/>
    </location>
</feature>
<feature type="binding site" evidence="1">
    <location>
        <begin position="12"/>
        <end position="15"/>
    </location>
    <ligand>
        <name>UDP-N-acetyl-alpha-D-glucosamine</name>
        <dbReference type="ChEBI" id="CHEBI:57705"/>
    </ligand>
</feature>
<feature type="binding site" evidence="1">
    <location>
        <position position="26"/>
    </location>
    <ligand>
        <name>UDP-N-acetyl-alpha-D-glucosamine</name>
        <dbReference type="ChEBI" id="CHEBI:57705"/>
    </ligand>
</feature>
<feature type="binding site" evidence="1">
    <location>
        <position position="79"/>
    </location>
    <ligand>
        <name>UDP-N-acetyl-alpha-D-glucosamine</name>
        <dbReference type="ChEBI" id="CHEBI:57705"/>
    </ligand>
</feature>
<feature type="binding site" evidence="1">
    <location>
        <begin position="84"/>
        <end position="85"/>
    </location>
    <ligand>
        <name>UDP-N-acetyl-alpha-D-glucosamine</name>
        <dbReference type="ChEBI" id="CHEBI:57705"/>
    </ligand>
</feature>
<feature type="binding site" evidence="1">
    <location>
        <position position="113"/>
    </location>
    <ligand>
        <name>Mg(2+)</name>
        <dbReference type="ChEBI" id="CHEBI:18420"/>
    </ligand>
</feature>
<feature type="binding site" evidence="1">
    <location>
        <position position="150"/>
    </location>
    <ligand>
        <name>UDP-N-acetyl-alpha-D-glucosamine</name>
        <dbReference type="ChEBI" id="CHEBI:57705"/>
    </ligand>
</feature>
<feature type="binding site" evidence="1">
    <location>
        <position position="165"/>
    </location>
    <ligand>
        <name>UDP-N-acetyl-alpha-D-glucosamine</name>
        <dbReference type="ChEBI" id="CHEBI:57705"/>
    </ligand>
</feature>
<feature type="binding site" evidence="1">
    <location>
        <position position="180"/>
    </location>
    <ligand>
        <name>UDP-N-acetyl-alpha-D-glucosamine</name>
        <dbReference type="ChEBI" id="CHEBI:57705"/>
    </ligand>
</feature>
<feature type="binding site" evidence="1">
    <location>
        <position position="238"/>
    </location>
    <ligand>
        <name>Mg(2+)</name>
        <dbReference type="ChEBI" id="CHEBI:18420"/>
    </ligand>
</feature>
<feature type="binding site" evidence="1">
    <location>
        <position position="238"/>
    </location>
    <ligand>
        <name>UDP-N-acetyl-alpha-D-glucosamine</name>
        <dbReference type="ChEBI" id="CHEBI:57705"/>
    </ligand>
</feature>
<feature type="binding site" evidence="1">
    <location>
        <position position="343"/>
    </location>
    <ligand>
        <name>UDP-N-acetyl-alpha-D-glucosamine</name>
        <dbReference type="ChEBI" id="CHEBI:57705"/>
    </ligand>
</feature>
<feature type="binding site" evidence="1">
    <location>
        <position position="361"/>
    </location>
    <ligand>
        <name>UDP-N-acetyl-alpha-D-glucosamine</name>
        <dbReference type="ChEBI" id="CHEBI:57705"/>
    </ligand>
</feature>
<feature type="binding site" evidence="1">
    <location>
        <position position="376"/>
    </location>
    <ligand>
        <name>UDP-N-acetyl-alpha-D-glucosamine</name>
        <dbReference type="ChEBI" id="CHEBI:57705"/>
    </ligand>
</feature>
<feature type="binding site" evidence="1">
    <location>
        <position position="387"/>
    </location>
    <ligand>
        <name>UDP-N-acetyl-alpha-D-glucosamine</name>
        <dbReference type="ChEBI" id="CHEBI:57705"/>
    </ligand>
</feature>
<feature type="binding site" evidence="1">
    <location>
        <position position="390"/>
    </location>
    <ligand>
        <name>acetyl-CoA</name>
        <dbReference type="ChEBI" id="CHEBI:57288"/>
    </ligand>
</feature>
<feature type="binding site" evidence="1">
    <location>
        <begin position="396"/>
        <end position="397"/>
    </location>
    <ligand>
        <name>acetyl-CoA</name>
        <dbReference type="ChEBI" id="CHEBI:57288"/>
    </ligand>
</feature>
<feature type="binding site" evidence="1">
    <location>
        <position position="415"/>
    </location>
    <ligand>
        <name>acetyl-CoA</name>
        <dbReference type="ChEBI" id="CHEBI:57288"/>
    </ligand>
</feature>
<feature type="binding site" evidence="1">
    <location>
        <position position="433"/>
    </location>
    <ligand>
        <name>acetyl-CoA</name>
        <dbReference type="ChEBI" id="CHEBI:57288"/>
    </ligand>
</feature>
<dbReference type="EC" id="2.7.7.23" evidence="1"/>
<dbReference type="EC" id="2.3.1.157" evidence="1"/>
<dbReference type="EMBL" id="CP000088">
    <property type="protein sequence ID" value="AAZ54452.1"/>
    <property type="molecule type" value="Genomic_DNA"/>
</dbReference>
<dbReference type="RefSeq" id="WP_011290861.1">
    <property type="nucleotide sequence ID" value="NC_007333.1"/>
</dbReference>
<dbReference type="SMR" id="Q47SW5"/>
<dbReference type="STRING" id="269800.Tfu_0414"/>
<dbReference type="KEGG" id="tfu:Tfu_0414"/>
<dbReference type="eggNOG" id="COG1207">
    <property type="taxonomic scope" value="Bacteria"/>
</dbReference>
<dbReference type="HOGENOM" id="CLU_029499_15_2_11"/>
<dbReference type="OrthoDB" id="9775031at2"/>
<dbReference type="UniPathway" id="UPA00113">
    <property type="reaction ID" value="UER00532"/>
</dbReference>
<dbReference type="UniPathway" id="UPA00113">
    <property type="reaction ID" value="UER00533"/>
</dbReference>
<dbReference type="UniPathway" id="UPA00973"/>
<dbReference type="GO" id="GO:0005737">
    <property type="term" value="C:cytoplasm"/>
    <property type="evidence" value="ECO:0007669"/>
    <property type="project" value="UniProtKB-SubCell"/>
</dbReference>
<dbReference type="GO" id="GO:0016020">
    <property type="term" value="C:membrane"/>
    <property type="evidence" value="ECO:0007669"/>
    <property type="project" value="GOC"/>
</dbReference>
<dbReference type="GO" id="GO:0019134">
    <property type="term" value="F:glucosamine-1-phosphate N-acetyltransferase activity"/>
    <property type="evidence" value="ECO:0007669"/>
    <property type="project" value="UniProtKB-UniRule"/>
</dbReference>
<dbReference type="GO" id="GO:0000287">
    <property type="term" value="F:magnesium ion binding"/>
    <property type="evidence" value="ECO:0007669"/>
    <property type="project" value="UniProtKB-UniRule"/>
</dbReference>
<dbReference type="GO" id="GO:0003977">
    <property type="term" value="F:UDP-N-acetylglucosamine diphosphorylase activity"/>
    <property type="evidence" value="ECO:0007669"/>
    <property type="project" value="UniProtKB-UniRule"/>
</dbReference>
<dbReference type="GO" id="GO:0000902">
    <property type="term" value="P:cell morphogenesis"/>
    <property type="evidence" value="ECO:0007669"/>
    <property type="project" value="UniProtKB-UniRule"/>
</dbReference>
<dbReference type="GO" id="GO:0071555">
    <property type="term" value="P:cell wall organization"/>
    <property type="evidence" value="ECO:0007669"/>
    <property type="project" value="UniProtKB-KW"/>
</dbReference>
<dbReference type="GO" id="GO:0009245">
    <property type="term" value="P:lipid A biosynthetic process"/>
    <property type="evidence" value="ECO:0007669"/>
    <property type="project" value="UniProtKB-UniRule"/>
</dbReference>
<dbReference type="GO" id="GO:0009252">
    <property type="term" value="P:peptidoglycan biosynthetic process"/>
    <property type="evidence" value="ECO:0007669"/>
    <property type="project" value="UniProtKB-UniRule"/>
</dbReference>
<dbReference type="GO" id="GO:0008360">
    <property type="term" value="P:regulation of cell shape"/>
    <property type="evidence" value="ECO:0007669"/>
    <property type="project" value="UniProtKB-KW"/>
</dbReference>
<dbReference type="GO" id="GO:0006048">
    <property type="term" value="P:UDP-N-acetylglucosamine biosynthetic process"/>
    <property type="evidence" value="ECO:0007669"/>
    <property type="project" value="UniProtKB-UniPathway"/>
</dbReference>
<dbReference type="CDD" id="cd02540">
    <property type="entry name" value="GT2_GlmU_N_bac"/>
    <property type="match status" value="1"/>
</dbReference>
<dbReference type="CDD" id="cd03353">
    <property type="entry name" value="LbH_GlmU_C"/>
    <property type="match status" value="1"/>
</dbReference>
<dbReference type="Gene3D" id="2.160.10.10">
    <property type="entry name" value="Hexapeptide repeat proteins"/>
    <property type="match status" value="1"/>
</dbReference>
<dbReference type="Gene3D" id="3.90.550.10">
    <property type="entry name" value="Spore Coat Polysaccharide Biosynthesis Protein SpsA, Chain A"/>
    <property type="match status" value="1"/>
</dbReference>
<dbReference type="HAMAP" id="MF_01631">
    <property type="entry name" value="GlmU"/>
    <property type="match status" value="1"/>
</dbReference>
<dbReference type="InterPro" id="IPR005882">
    <property type="entry name" value="Bifunctional_GlmU"/>
</dbReference>
<dbReference type="InterPro" id="IPR050065">
    <property type="entry name" value="GlmU-like"/>
</dbReference>
<dbReference type="InterPro" id="IPR038009">
    <property type="entry name" value="GlmU_C_LbH"/>
</dbReference>
<dbReference type="InterPro" id="IPR005835">
    <property type="entry name" value="NTP_transferase_dom"/>
</dbReference>
<dbReference type="InterPro" id="IPR029044">
    <property type="entry name" value="Nucleotide-diphossugar_trans"/>
</dbReference>
<dbReference type="InterPro" id="IPR011004">
    <property type="entry name" value="Trimer_LpxA-like_sf"/>
</dbReference>
<dbReference type="NCBIfam" id="TIGR01173">
    <property type="entry name" value="glmU"/>
    <property type="match status" value="1"/>
</dbReference>
<dbReference type="NCBIfam" id="NF010932">
    <property type="entry name" value="PRK14352.1"/>
    <property type="match status" value="1"/>
</dbReference>
<dbReference type="PANTHER" id="PTHR43584:SF3">
    <property type="entry name" value="BIFUNCTIONAL PROTEIN GLMU"/>
    <property type="match status" value="1"/>
</dbReference>
<dbReference type="PANTHER" id="PTHR43584">
    <property type="entry name" value="NUCLEOTIDYL TRANSFERASE"/>
    <property type="match status" value="1"/>
</dbReference>
<dbReference type="Pfam" id="PF00483">
    <property type="entry name" value="NTP_transferase"/>
    <property type="match status" value="1"/>
</dbReference>
<dbReference type="SUPFAM" id="SSF53448">
    <property type="entry name" value="Nucleotide-diphospho-sugar transferases"/>
    <property type="match status" value="1"/>
</dbReference>
<dbReference type="SUPFAM" id="SSF51161">
    <property type="entry name" value="Trimeric LpxA-like enzymes"/>
    <property type="match status" value="1"/>
</dbReference>
<gene>
    <name evidence="1" type="primary">glmU</name>
    <name type="ordered locus">Tfu_0414</name>
</gene>
<accession>Q47SW5</accession>
<comment type="function">
    <text evidence="1">Catalyzes the last two sequential reactions in the de novo biosynthetic pathway for UDP-N-acetylglucosamine (UDP-GlcNAc). The C-terminal domain catalyzes the transfer of acetyl group from acetyl coenzyme A to glucosamine-1-phosphate (GlcN-1-P) to produce N-acetylglucosamine-1-phosphate (GlcNAc-1-P), which is converted into UDP-GlcNAc by the transfer of uridine 5-monophosphate (from uridine 5-triphosphate), a reaction catalyzed by the N-terminal domain.</text>
</comment>
<comment type="catalytic activity">
    <reaction evidence="1">
        <text>alpha-D-glucosamine 1-phosphate + acetyl-CoA = N-acetyl-alpha-D-glucosamine 1-phosphate + CoA + H(+)</text>
        <dbReference type="Rhea" id="RHEA:13725"/>
        <dbReference type="ChEBI" id="CHEBI:15378"/>
        <dbReference type="ChEBI" id="CHEBI:57287"/>
        <dbReference type="ChEBI" id="CHEBI:57288"/>
        <dbReference type="ChEBI" id="CHEBI:57776"/>
        <dbReference type="ChEBI" id="CHEBI:58516"/>
        <dbReference type="EC" id="2.3.1.157"/>
    </reaction>
</comment>
<comment type="catalytic activity">
    <reaction evidence="1">
        <text>N-acetyl-alpha-D-glucosamine 1-phosphate + UTP + H(+) = UDP-N-acetyl-alpha-D-glucosamine + diphosphate</text>
        <dbReference type="Rhea" id="RHEA:13509"/>
        <dbReference type="ChEBI" id="CHEBI:15378"/>
        <dbReference type="ChEBI" id="CHEBI:33019"/>
        <dbReference type="ChEBI" id="CHEBI:46398"/>
        <dbReference type="ChEBI" id="CHEBI:57705"/>
        <dbReference type="ChEBI" id="CHEBI:57776"/>
        <dbReference type="EC" id="2.7.7.23"/>
    </reaction>
</comment>
<comment type="cofactor">
    <cofactor evidence="1">
        <name>Mg(2+)</name>
        <dbReference type="ChEBI" id="CHEBI:18420"/>
    </cofactor>
    <text evidence="1">Binds 1 Mg(2+) ion per subunit.</text>
</comment>
<comment type="pathway">
    <text evidence="1">Nucleotide-sugar biosynthesis; UDP-N-acetyl-alpha-D-glucosamine biosynthesis; N-acetyl-alpha-D-glucosamine 1-phosphate from alpha-D-glucosamine 6-phosphate (route II): step 2/2.</text>
</comment>
<comment type="pathway">
    <text evidence="1">Nucleotide-sugar biosynthesis; UDP-N-acetyl-alpha-D-glucosamine biosynthesis; UDP-N-acetyl-alpha-D-glucosamine from N-acetyl-alpha-D-glucosamine 1-phosphate: step 1/1.</text>
</comment>
<comment type="pathway">
    <text evidence="1">Bacterial outer membrane biogenesis; LPS lipid A biosynthesis.</text>
</comment>
<comment type="subunit">
    <text evidence="1">Homotrimer.</text>
</comment>
<comment type="subcellular location">
    <subcellularLocation>
        <location evidence="1">Cytoplasm</location>
    </subcellularLocation>
</comment>
<comment type="similarity">
    <text evidence="1">In the N-terminal section; belongs to the N-acetylglucosamine-1-phosphate uridyltransferase family.</text>
</comment>
<comment type="similarity">
    <text evidence="1">In the C-terminal section; belongs to the transferase hexapeptide repeat family.</text>
</comment>
<keyword id="KW-0012">Acyltransferase</keyword>
<keyword id="KW-0133">Cell shape</keyword>
<keyword id="KW-0961">Cell wall biogenesis/degradation</keyword>
<keyword id="KW-0963">Cytoplasm</keyword>
<keyword id="KW-0460">Magnesium</keyword>
<keyword id="KW-0479">Metal-binding</keyword>
<keyword id="KW-0511">Multifunctional enzyme</keyword>
<keyword id="KW-0548">Nucleotidyltransferase</keyword>
<keyword id="KW-0573">Peptidoglycan synthesis</keyword>
<keyword id="KW-0677">Repeat</keyword>
<keyword id="KW-0808">Transferase</keyword>
<evidence type="ECO:0000255" key="1">
    <source>
        <dbReference type="HAMAP-Rule" id="MF_01631"/>
    </source>
</evidence>
<evidence type="ECO:0000256" key="2">
    <source>
        <dbReference type="SAM" id="MobiDB-lite"/>
    </source>
</evidence>
<sequence>MSASRPAAVMVLAAGEGTRMKSRRPKVLHEICGRSLLGHVLAAVAELEPQRTVVVVGHAREQVTEHLKSIAPHAITALQEEQKGTGHAVRMAIEALRAQNVELTGTVVLTCGDTPLLRGATLRDLVAAHEAEGNAVTILSARVPDPTGYGRIVRDAAGAVTGIVEHADATEEQRAVDEINSGMYAFDGALLSQVVHRLSADNAKGEEYITDAVALLRGDGHRVGAYIAPDRTEVEGVNDRVQLAEARRLLNARLLEQLMRDGVTVVDPASTWVDVDVRVGRDAVLEPQTQLQGRTVIGEGAQVGPATVLCDTEVGEDAVVSHTVAREAVIGPEATVGPYAYLRPGARLDRGVKIGTFVEVKNSTVGEGSKVPHLTYVGDADIGKGVNIGASSVFVNYDGVNKHRTVIGDYARTGSDTMFVAPVRVGDGAYTGAGTVVREDVPPGALAVSAGPQRTIEGWVERKRPGTPAAQAAERARARSEEDR</sequence>
<protein>
    <recommendedName>
        <fullName evidence="1">Bifunctional protein GlmU</fullName>
    </recommendedName>
    <domain>
        <recommendedName>
            <fullName evidence="1">UDP-N-acetylglucosamine pyrophosphorylase</fullName>
            <ecNumber evidence="1">2.7.7.23</ecNumber>
        </recommendedName>
        <alternativeName>
            <fullName evidence="1">N-acetylglucosamine-1-phosphate uridyltransferase</fullName>
        </alternativeName>
    </domain>
    <domain>
        <recommendedName>
            <fullName evidence="1">Glucosamine-1-phosphate N-acetyltransferase</fullName>
            <ecNumber evidence="1">2.3.1.157</ecNumber>
        </recommendedName>
    </domain>
</protein>